<comment type="function">
    <text evidence="2">High molecular weight cytoskeletal protein concentrated at regions of cell-matrix and cell-cell contacts. Involved in connections of major cytoskeletal structures to the plasma membrane. With KANK1 co-organize the assembly of cortical microtubule stabilizing complexes (CMSCs) positioned to control microtubule-actin crosstalk at focal adhesions (FAs) rims.</text>
</comment>
<comment type="subunit">
    <text evidence="2 3 6 7 8 9 11 12 13 14 16">Part of a complex composed of THSD1, PTK2/FAK1, TLN1 and VCL (PubMed:29069646). Interacts with THSD1 (PubMed:27895300, PubMed:29069646); this promotes interaction with PTK2/FAK1 and VCL. Binds with high affinity to VCL and with low affinity to integrins (PubMed:15070891). Interacts with APBB1IP; this inhibits VCL binding. Interacts with PTK2/FAK1 (By similarity). Interacts with PIP5K1C and NRAP (PubMed:10320340, PubMed:12422220). Interacts with LAYN (By similarity). Interacts with SYNM (PubMed:18342854). Interacts with ITGB1; the interaction is prevented by competitive binding of ITGB1BP1 (PubMed:12473654, PubMed:21768292). Interacts with SVEP1 (By similarity). Interacts (via R7 domain) with KANK1 or KANK2 (via KN motif); this interaction likely initiates the assembly of cortical microtubule stabilization complexes (CMSCs) at the vicinity of focal adhesions.</text>
</comment>
<comment type="subunit">
    <molecule>Isoform 1</molecule>
    <text evidence="17">Interacts with VCL; shows reduced VCL binding compared to isoform 2 (PubMed:36880935). Interacts with APBB1IP; shows similar level of binding compared to isoform 2 (PubMed:36880935).</text>
</comment>
<comment type="subunit">
    <molecule>Isoform 2</molecule>
    <text evidence="17">Interacts with VCL; shows enhanced VCL binding compared to isoform 1 (PubMed:36880935). Interacts with APBB1IP; shows similar level of binding compared to isoform 1 (PubMed:36880935).</text>
</comment>
<comment type="subunit">
    <text evidence="13">(Microbial infection) Interacts with human cytomegalovirus protein UL135.</text>
</comment>
<comment type="interaction">
    <interactant intactId="EBI-2462036">
        <id>Q9Y490</id>
    </interactant>
    <interactant intactId="EBI-2803146">
        <id>Q2M1Z3</id>
        <label>ARHGAP31</label>
    </interactant>
    <organismsDiffer>false</organismsDiffer>
    <experiments>2</experiments>
</comment>
<comment type="interaction">
    <interactant intactId="EBI-2462036">
        <id>Q9Y490</id>
    </interactant>
    <interactant intactId="EBI-297353">
        <id>P00533</id>
        <label>EGFR</label>
    </interactant>
    <organismsDiffer>false</organismsDiffer>
    <experiments>2</experiments>
</comment>
<comment type="interaction">
    <interactant intactId="EBI-2462036">
        <id>Q9Y490</id>
    </interactant>
    <interactant intactId="EBI-641062">
        <id>P04626</id>
        <label>ERBB2</label>
    </interactant>
    <organismsDiffer>false</organismsDiffer>
    <experiments>3</experiments>
</comment>
<comment type="interaction">
    <interactant intactId="EBI-2462036">
        <id>Q9Y490</id>
    </interactant>
    <interactant intactId="EBI-703066">
        <id>P05556</id>
        <label>ITGB1</label>
    </interactant>
    <organismsDiffer>false</organismsDiffer>
    <experiments>2</experiments>
</comment>
<comment type="interaction">
    <interactant intactId="EBI-2462036">
        <id>Q9Y490</id>
    </interactant>
    <interactant intactId="EBI-702847">
        <id>P05106</id>
        <label>ITGB3</label>
    </interactant>
    <organismsDiffer>false</organismsDiffer>
    <experiments>5</experiments>
</comment>
<comment type="interaction">
    <interactant intactId="EBI-2462036">
        <id>Q9Y490</id>
    </interactant>
    <interactant intactId="EBI-8869029">
        <id>O60331</id>
        <label>PIP5K1C</label>
    </interactant>
    <organismsDiffer>false</organismsDiffer>
    <experiments>8</experiments>
</comment>
<comment type="interaction">
    <interactant intactId="EBI-2462036">
        <id>Q9Y490</id>
    </interactant>
    <interactant intactId="EBI-2480756">
        <id>P07949</id>
        <label>RET</label>
    </interactant>
    <organismsDiffer>false</organismsDiffer>
    <experiments>2</experiments>
</comment>
<comment type="subcellular location">
    <subcellularLocation>
        <location evidence="1">Cell projection</location>
        <location evidence="1">Ruffle membrane</location>
        <topology evidence="1">Peripheral membrane protein</topology>
        <orientation evidence="1">Cytoplasmic side</orientation>
    </subcellularLocation>
    <subcellularLocation>
        <location evidence="1">Cytoplasm</location>
        <location evidence="1">Cytoskeleton</location>
    </subcellularLocation>
    <subcellularLocation>
        <location evidence="2">Cell surface</location>
    </subcellularLocation>
    <subcellularLocation>
        <location evidence="2">Cell junction</location>
        <location evidence="2">Focal adhesion</location>
    </subcellularLocation>
    <text evidence="1">Colocalizes with LAYN at the membrane ruffles. Localized preferentially in focal adhesions than fibrillar adhesions (By similarity).</text>
</comment>
<comment type="alternative products">
    <event type="alternative splicing"/>
    <isoform>
        <id>Q9Y490-1</id>
        <name>1</name>
        <sequence type="displayed"/>
    </isoform>
    <isoform>
        <id>Q9Y490-2</id>
        <name>2</name>
        <sequence type="described" ref="VSP_061952"/>
    </isoform>
</comment>
<comment type="tissue specificity">
    <molecule>Isoform 2</molecule>
    <text evidence="15">Expressed at low to non-detectable levels in many tissues but highly expressed in skin and pancreas with other tissues including kidney cortex, endocervix, testis, pituitary, liver, and spleen also showing robust expression.</text>
</comment>
<comment type="induction">
    <molecule>Isoform 1</molecule>
    <text evidence="17">By a combination of TGFB and EGF.</text>
</comment>
<comment type="domain">
    <text evidence="2">Consists of an N-terminal FERM domain linked via a short unstructured region to a large flexible C-terminal rod which contains 13 amphipathic helical bundles (R1-R13). The rod begins with a five-helix bundle (R1) followed by three four-helix bundles (R2-R4). These are followed by a series of eight five-helix bundles (R5-R7 and R9-R13) in which the N- and C-termini are positioned at opposite ends of the bundle, creating a linear chain. The four-helix bundle R8 does not disrupt the chain because it is inserted into a loop in the R7 five-helix bundle. The uneven distribution of four- and five-helix bundles creates two distinctly different zones: a compact N-terminal region sensitive to stretch and a linear C-terminal region that is optimal for force transmission.</text>
</comment>
<comment type="miscellaneous">
    <molecule>Isoform 2</molecule>
    <text evidence="17">Shows reduced mechanical stability compared to isoform 1 (PubMed:36880935). Shows altered focal adhesion formation compared to isoform 1 with cells having a greater number of small adhesions compared to those expressing isoform 1 (PubMed:36880935).</text>
</comment>
<comment type="miscellaneous">
    <molecule>Isoform 2</molecule>
    <text evidence="15">Expression in cancer cells is associated with altered drug responses. Cells show increased sensitivity to EGFR inhibitors but are resistant to drugs targeting PI3K signaling and cytoskeleton regulation.</text>
</comment>
<comment type="sequence caution" evidence="19">
    <conflict type="erroneous initiation">
        <sequence resource="EMBL-CDS" id="BAA82979"/>
    </conflict>
    <text>Extended N-terminus.</text>
</comment>
<proteinExistence type="evidence at protein level"/>
<accession>Q9Y490</accession>
<accession>A0A1S5UZ07</accession>
<accession>A6NMY0</accession>
<accession>Q86YD0</accession>
<accession>Q9NZQ2</accession>
<accession>Q9UHH8</accession>
<accession>Q9UPX3</accession>
<feature type="chain" id="PRO_0000219428" description="Talin-1">
    <location>
        <begin position="1"/>
        <end position="2541"/>
    </location>
</feature>
<feature type="domain" description="FERM" evidence="4">
    <location>
        <begin position="86"/>
        <end position="403"/>
    </location>
</feature>
<feature type="domain" description="I/LWEQ" evidence="5">
    <location>
        <begin position="2293"/>
        <end position="2533"/>
    </location>
</feature>
<feature type="region of interest" description="Interaction with LAYN" evidence="3">
    <location>
        <begin position="280"/>
        <end position="435"/>
    </location>
</feature>
<feature type="region of interest" description="Helical bundle R1" evidence="2">
    <location>
        <begin position="482"/>
        <end position="655"/>
    </location>
</feature>
<feature type="region of interest" description="Helical bundle R2" evidence="2">
    <location>
        <begin position="656"/>
        <end position="786"/>
    </location>
</feature>
<feature type="region of interest" description="Helical bundle R3" evidence="2">
    <location>
        <begin position="787"/>
        <end position="911"/>
    </location>
</feature>
<feature type="region of interest" description="Helical bundle R4" evidence="2">
    <location>
        <begin position="913"/>
        <end position="1044"/>
    </location>
</feature>
<feature type="region of interest" description="Helical bundle R5" evidence="2">
    <location>
        <begin position="1046"/>
        <end position="1206"/>
    </location>
</feature>
<feature type="region of interest" description="Helical bundle R6" evidence="2">
    <location>
        <begin position="1207"/>
        <end position="1357"/>
    </location>
</feature>
<feature type="region of interest" description="Interaction with SYNM" evidence="11">
    <location>
        <begin position="1327"/>
        <end position="1948"/>
    </location>
</feature>
<feature type="region of interest" description="Helical bundle R7A" evidence="2">
    <location>
        <begin position="1358"/>
        <end position="1453"/>
    </location>
</feature>
<feature type="region of interest" description="Interaction with VCL and F-actin" evidence="2">
    <location>
        <begin position="1359"/>
        <end position="1659"/>
    </location>
</feature>
<feature type="region of interest" description="Helical bundle R8" evidence="2">
    <location>
        <begin position="1461"/>
        <end position="1580"/>
    </location>
</feature>
<feature type="region of interest" description="Helical bundle R7B" evidence="2">
    <location>
        <begin position="1581"/>
        <end position="1653"/>
    </location>
</feature>
<feature type="region of interest" description="Helical bundle R9" evidence="2">
    <location>
        <begin position="1655"/>
        <end position="1822"/>
    </location>
</feature>
<feature type="region of interest" description="Helical bundle R10" evidence="2">
    <location>
        <begin position="1823"/>
        <end position="1973"/>
    </location>
</feature>
<feature type="region of interest" description="Helical bundle R11" evidence="2">
    <location>
        <begin position="1974"/>
        <end position="2140"/>
    </location>
</feature>
<feature type="region of interest" description="Helical bundle R12" evidence="2">
    <location>
        <begin position="2141"/>
        <end position="2294"/>
    </location>
</feature>
<feature type="region of interest" description="Helical bundle R13" evidence="2">
    <location>
        <begin position="2300"/>
        <end position="2482"/>
    </location>
</feature>
<feature type="modified residue" description="Phosphothreonine" evidence="25">
    <location>
        <position position="167"/>
    </location>
</feature>
<feature type="modified residue" description="Phosphoserine" evidence="26">
    <location>
        <position position="405"/>
    </location>
</feature>
<feature type="modified residue" description="Phosphoserine" evidence="20 22 23 25">
    <location>
        <position position="425"/>
    </location>
</feature>
<feature type="modified residue" description="Phosphoserine" evidence="2">
    <location>
        <position position="446"/>
    </location>
</feature>
<feature type="modified residue" description="Phosphoserine" evidence="2">
    <location>
        <position position="620"/>
    </location>
</feature>
<feature type="modified residue" description="Phosphoserine" evidence="2">
    <location>
        <position position="729"/>
    </location>
</feature>
<feature type="modified residue" description="Phosphoserine" evidence="26">
    <location>
        <position position="1021"/>
    </location>
</feature>
<feature type="modified residue" description="Phosphotyrosine" evidence="2">
    <location>
        <position position="1116"/>
    </location>
</feature>
<feature type="modified residue" description="Phosphothreonine" evidence="26">
    <location>
        <position position="1142"/>
    </location>
</feature>
<feature type="modified residue" description="Phosphoserine" evidence="26">
    <location>
        <position position="1201"/>
    </location>
</feature>
<feature type="modified residue" description="Phosphoserine" evidence="26">
    <location>
        <position position="1225"/>
    </location>
</feature>
<feature type="modified residue" description="Phosphothreonine" evidence="26">
    <location>
        <position position="1263"/>
    </location>
</feature>
<feature type="modified residue" description="Phosphoserine" evidence="26">
    <location>
        <position position="1323"/>
    </location>
</feature>
<feature type="modified residue" description="N6-acetyllysine" evidence="2">
    <location>
        <position position="1544"/>
    </location>
</feature>
<feature type="modified residue" description="Phosphoserine" evidence="26">
    <location>
        <position position="1849"/>
    </location>
</feature>
<feature type="modified residue" description="Phosphothreonine" evidence="26">
    <location>
        <position position="1855"/>
    </location>
</feature>
<feature type="modified residue" description="Phosphoserine" evidence="2">
    <location>
        <position position="1878"/>
    </location>
</feature>
<feature type="modified residue" description="N6-acetyllysine" evidence="21">
    <location>
        <position position="2031"/>
    </location>
</feature>
<feature type="modified residue" description="Phosphoserine" evidence="24 26">
    <location>
        <position position="2040"/>
    </location>
</feature>
<feature type="modified residue" description="N6-acetyllysine" evidence="21">
    <location>
        <position position="2115"/>
    </location>
</feature>
<feature type="splice variant" id="VSP_061952" description="In isoform 2.">
    <original>Q</original>
    <variation>QICASRGAGVRSPPDSPT</variation>
    <location>
        <position position="665"/>
    </location>
</feature>
<feature type="sequence variant" id="VAR_023751" description="In dbSNP:rs2295795." evidence="18">
    <original>S</original>
    <variation>L</variation>
    <location>
        <position position="1227"/>
    </location>
</feature>
<feature type="sequence variant" id="VAR_023752" description="In dbSNP:rs17854239." evidence="10">
    <original>R</original>
    <variation>W</variation>
    <location>
        <position position="1919"/>
    </location>
</feature>
<feature type="sequence variant" id="VAR_055538" description="In dbSNP:rs35642290.">
    <original>A</original>
    <variation>T</variation>
    <location>
        <position position="1984"/>
    </location>
</feature>
<feature type="sequence conflict" description="In Ref. 1; AAD13152 and 2; AAF23322." evidence="19" ref="1 2">
    <original>R</original>
    <variation>G</variation>
    <location>
        <position position="824"/>
    </location>
</feature>
<feature type="sequence conflict" description="In Ref. 1; AAD13152 and 2; AAF23322." evidence="19" ref="1 2">
    <original>A</original>
    <variation>P</variation>
    <location>
        <position position="1549"/>
    </location>
</feature>
<feature type="sequence conflict" description="In Ref. 1; AAD13152 and 2; AAF23322." evidence="19" ref="1 2">
    <original>K</original>
    <variation>Q</variation>
    <location>
        <position position="1604"/>
    </location>
</feature>
<feature type="sequence conflict" description="In Ref. 1; AAD13152 and 2; AAF23322." evidence="19" ref="1 2">
    <original>Q</original>
    <variation>E</variation>
    <location>
        <position position="1701"/>
    </location>
</feature>
<feature type="sequence conflict" description="In Ref. 1; AAD13152 and 2; AAF23322." evidence="19" ref="1 2">
    <original>N</original>
    <variation>H</variation>
    <location>
        <position position="1718"/>
    </location>
</feature>
<feature type="sequence conflict" description="In Ref. 1; AAD13152." evidence="19" ref="1">
    <original>A</original>
    <variation>R</variation>
    <location>
        <position position="1966"/>
    </location>
</feature>
<feature type="sequence conflict" description="In Ref. 2; AAF27330." evidence="19" ref="2">
    <location>
        <position position="2256"/>
    </location>
</feature>
<feature type="strand" evidence="28">
    <location>
        <begin position="311"/>
        <end position="313"/>
    </location>
</feature>
<feature type="strand" evidence="28">
    <location>
        <begin position="316"/>
        <end position="318"/>
    </location>
</feature>
<feature type="strand" evidence="28">
    <location>
        <begin position="320"/>
        <end position="327"/>
    </location>
</feature>
<feature type="strand" evidence="28">
    <location>
        <begin position="329"/>
        <end position="333"/>
    </location>
</feature>
<feature type="strand" evidence="28">
    <location>
        <begin position="336"/>
        <end position="340"/>
    </location>
</feature>
<feature type="turn" evidence="28">
    <location>
        <begin position="342"/>
        <end position="344"/>
    </location>
</feature>
<feature type="strand" evidence="28">
    <location>
        <begin position="363"/>
        <end position="369"/>
    </location>
</feature>
<feature type="strand" evidence="28">
    <location>
        <begin position="377"/>
        <end position="381"/>
    </location>
</feature>
<feature type="helix" evidence="28">
    <location>
        <begin position="385"/>
        <end position="399"/>
    </location>
</feature>
<feature type="helix" evidence="27">
    <location>
        <begin position="608"/>
        <end position="625"/>
    </location>
</feature>
<feature type="helix" evidence="29">
    <location>
        <begin position="2079"/>
        <end position="2098"/>
    </location>
</feature>
<organism>
    <name type="scientific">Homo sapiens</name>
    <name type="common">Human</name>
    <dbReference type="NCBI Taxonomy" id="9606"/>
    <lineage>
        <taxon>Eukaryota</taxon>
        <taxon>Metazoa</taxon>
        <taxon>Chordata</taxon>
        <taxon>Craniata</taxon>
        <taxon>Vertebrata</taxon>
        <taxon>Euteleostomi</taxon>
        <taxon>Mammalia</taxon>
        <taxon>Eutheria</taxon>
        <taxon>Euarchontoglires</taxon>
        <taxon>Primates</taxon>
        <taxon>Haplorrhini</taxon>
        <taxon>Catarrhini</taxon>
        <taxon>Hominidae</taxon>
        <taxon>Homo</taxon>
    </lineage>
</organism>
<dbReference type="EMBL" id="AF078828">
    <property type="protein sequence ID" value="AAD13152.1"/>
    <property type="molecule type" value="mRNA"/>
</dbReference>
<dbReference type="EMBL" id="AF177198">
    <property type="protein sequence ID" value="AAF23322.1"/>
    <property type="molecule type" value="mRNA"/>
</dbReference>
<dbReference type="EMBL" id="AF178534">
    <property type="protein sequence ID" value="AAF27330.1"/>
    <property type="molecule type" value="Genomic_DNA"/>
</dbReference>
<dbReference type="EMBL" id="AF178081">
    <property type="protein sequence ID" value="AAF27330.1"/>
    <property type="status" value="JOINED"/>
    <property type="molecule type" value="Genomic_DNA"/>
</dbReference>
<dbReference type="EMBL" id="AB028950">
    <property type="protein sequence ID" value="BAA82979.2"/>
    <property type="status" value="ALT_INIT"/>
    <property type="molecule type" value="mRNA"/>
</dbReference>
<dbReference type="EMBL" id="KX533478">
    <property type="protein sequence ID" value="AQN67632.1"/>
    <property type="molecule type" value="mRNA"/>
</dbReference>
<dbReference type="EMBL" id="AL133410">
    <property type="status" value="NOT_ANNOTATED_CDS"/>
    <property type="molecule type" value="Genomic_DNA"/>
</dbReference>
<dbReference type="EMBL" id="CH471071">
    <property type="protein sequence ID" value="EAW58352.1"/>
    <property type="molecule type" value="Genomic_DNA"/>
</dbReference>
<dbReference type="EMBL" id="BC042923">
    <property type="protein sequence ID" value="AAH42923.1"/>
    <property type="molecule type" value="mRNA"/>
</dbReference>
<dbReference type="CCDS" id="CCDS35009.1">
    <molecule id="Q9Y490-1"/>
</dbReference>
<dbReference type="RefSeq" id="NP_006280.3">
    <molecule id="Q9Y490-1"/>
    <property type="nucleotide sequence ID" value="NM_006289.3"/>
</dbReference>
<dbReference type="PDB" id="1SYQ">
    <property type="method" value="X-ray"/>
    <property type="resolution" value="2.42 A"/>
    <property type="chains" value="B=607-631"/>
</dbReference>
<dbReference type="PDB" id="2MWN">
    <property type="method" value="NMR"/>
    <property type="chains" value="B=308-400"/>
</dbReference>
<dbReference type="PDB" id="4DJ9">
    <property type="method" value="X-ray"/>
    <property type="resolution" value="2.25 A"/>
    <property type="chains" value="B=2075-2103"/>
</dbReference>
<dbReference type="PDB" id="6R9T">
    <property type="method" value="EM"/>
    <property type="resolution" value="6.20 A"/>
    <property type="chains" value="A=1-2541"/>
</dbReference>
<dbReference type="PDBsum" id="1SYQ"/>
<dbReference type="PDBsum" id="2MWN"/>
<dbReference type="PDBsum" id="4DJ9"/>
<dbReference type="PDBsum" id="6R9T"/>
<dbReference type="BMRB" id="Q9Y490"/>
<dbReference type="EMDB" id="EMD-4772"/>
<dbReference type="SASBDB" id="Q9Y490"/>
<dbReference type="SMR" id="Q9Y490"/>
<dbReference type="BioGRID" id="112949">
    <property type="interactions" value="280"/>
</dbReference>
<dbReference type="ComplexPortal" id="CPX-791">
    <property type="entry name" value="Talin-1-Vinculin focal adhesion activation complex"/>
</dbReference>
<dbReference type="CORUM" id="Q9Y490"/>
<dbReference type="ELM" id="Q9Y490"/>
<dbReference type="FunCoup" id="Q9Y490">
    <property type="interactions" value="1708"/>
</dbReference>
<dbReference type="IntAct" id="Q9Y490">
    <property type="interactions" value="94"/>
</dbReference>
<dbReference type="MINT" id="Q9Y490"/>
<dbReference type="STRING" id="9606.ENSP00000316029"/>
<dbReference type="TCDB" id="8.A.25.1.6">
    <property type="family name" value="the ezrin/radixin/moesin (ezrin) family"/>
</dbReference>
<dbReference type="CarbonylDB" id="Q9Y490"/>
<dbReference type="GlyCosmos" id="Q9Y490">
    <property type="glycosylation" value="2 sites, 1 glycan"/>
</dbReference>
<dbReference type="GlyGen" id="Q9Y490">
    <property type="glycosylation" value="4 sites, 1 O-linked glycan (4 sites)"/>
</dbReference>
<dbReference type="iPTMnet" id="Q9Y490"/>
<dbReference type="MetOSite" id="Q9Y490"/>
<dbReference type="PhosphoSitePlus" id="Q9Y490"/>
<dbReference type="SwissPalm" id="Q9Y490"/>
<dbReference type="BioMuta" id="TLN1"/>
<dbReference type="DMDM" id="81175200"/>
<dbReference type="OGP" id="Q9Y490"/>
<dbReference type="CPTAC" id="CPTAC-282"/>
<dbReference type="CPTAC" id="CPTAC-283"/>
<dbReference type="jPOST" id="Q9Y490"/>
<dbReference type="MassIVE" id="Q9Y490"/>
<dbReference type="PaxDb" id="9606-ENSP00000316029"/>
<dbReference type="PeptideAtlas" id="Q9Y490"/>
<dbReference type="PRIDE" id="Q9Y490"/>
<dbReference type="ProteomicsDB" id="86131"/>
<dbReference type="Pumba" id="Q9Y490"/>
<dbReference type="Antibodypedia" id="1497">
    <property type="antibodies" value="706 antibodies from 42 providers"/>
</dbReference>
<dbReference type="DNASU" id="7094"/>
<dbReference type="Ensembl" id="ENST00000314888.10">
    <molecule id="Q9Y490-1"/>
    <property type="protein sequence ID" value="ENSP00000316029.9"/>
    <property type="gene ID" value="ENSG00000137076.22"/>
</dbReference>
<dbReference type="Ensembl" id="ENST00000706939.1">
    <molecule id="Q9Y490-2"/>
    <property type="protein sequence ID" value="ENSP00000516659.1"/>
    <property type="gene ID" value="ENSG00000137076.22"/>
</dbReference>
<dbReference type="GeneID" id="7094"/>
<dbReference type="KEGG" id="hsa:7094"/>
<dbReference type="MANE-Select" id="ENST00000314888.10">
    <property type="protein sequence ID" value="ENSP00000316029.9"/>
    <property type="RefSeq nucleotide sequence ID" value="NM_006289.4"/>
    <property type="RefSeq protein sequence ID" value="NP_006280.3"/>
</dbReference>
<dbReference type="UCSC" id="uc003zxt.3">
    <molecule id="Q9Y490-1"/>
    <property type="organism name" value="human"/>
</dbReference>
<dbReference type="AGR" id="HGNC:11845"/>
<dbReference type="CTD" id="7094"/>
<dbReference type="DisGeNET" id="7094"/>
<dbReference type="GeneCards" id="TLN1"/>
<dbReference type="HGNC" id="HGNC:11845">
    <property type="gene designation" value="TLN1"/>
</dbReference>
<dbReference type="HPA" id="ENSG00000137076">
    <property type="expression patterns" value="Low tissue specificity"/>
</dbReference>
<dbReference type="MalaCards" id="TLN1"/>
<dbReference type="MIM" id="186745">
    <property type="type" value="gene"/>
</dbReference>
<dbReference type="neXtProt" id="NX_Q9Y490"/>
<dbReference type="OpenTargets" id="ENSG00000137076"/>
<dbReference type="PharmGKB" id="PA36547"/>
<dbReference type="VEuPathDB" id="HostDB:ENSG00000137076"/>
<dbReference type="eggNOG" id="KOG4261">
    <property type="taxonomic scope" value="Eukaryota"/>
</dbReference>
<dbReference type="GeneTree" id="ENSGT00940000157006"/>
<dbReference type="HOGENOM" id="CLU_000364_1_1_1"/>
<dbReference type="InParanoid" id="Q9Y490"/>
<dbReference type="OMA" id="VDMTQHY"/>
<dbReference type="OrthoDB" id="10262320at2759"/>
<dbReference type="PAN-GO" id="Q9Y490">
    <property type="GO annotations" value="4 GO annotations based on evolutionary models"/>
</dbReference>
<dbReference type="PhylomeDB" id="Q9Y490"/>
<dbReference type="TreeFam" id="TF314677"/>
<dbReference type="PathwayCommons" id="Q9Y490"/>
<dbReference type="Reactome" id="R-HSA-114608">
    <property type="pathway name" value="Platelet degranulation"/>
</dbReference>
<dbReference type="Reactome" id="R-HSA-354192">
    <property type="pathway name" value="Integrin signaling"/>
</dbReference>
<dbReference type="Reactome" id="R-HSA-354194">
    <property type="pathway name" value="GRB2:SOS provides linkage to MAPK signaling for Integrins"/>
</dbReference>
<dbReference type="Reactome" id="R-HSA-372708">
    <property type="pathway name" value="p130Cas linkage to MAPK signaling for integrins"/>
</dbReference>
<dbReference type="Reactome" id="R-HSA-381038">
    <property type="pathway name" value="XBP1(S) activates chaperone genes"/>
</dbReference>
<dbReference type="Reactome" id="R-HSA-399955">
    <property type="pathway name" value="SEMA3A-Plexin repulsion signaling by inhibiting Integrin adhesion"/>
</dbReference>
<dbReference type="Reactome" id="R-HSA-445355">
    <property type="pathway name" value="Smooth Muscle Contraction"/>
</dbReference>
<dbReference type="Reactome" id="R-HSA-5674135">
    <property type="pathway name" value="MAP2K and MAPK activation"/>
</dbReference>
<dbReference type="Reactome" id="R-HSA-6802946">
    <property type="pathway name" value="Signaling by moderate kinase activity BRAF mutants"/>
</dbReference>
<dbReference type="Reactome" id="R-HSA-6802948">
    <property type="pathway name" value="Signaling by high-kinase activity BRAF mutants"/>
</dbReference>
<dbReference type="Reactome" id="R-HSA-6802952">
    <property type="pathway name" value="Signaling by BRAF and RAF1 fusions"/>
</dbReference>
<dbReference type="Reactome" id="R-HSA-6802955">
    <property type="pathway name" value="Paradoxical activation of RAF signaling by kinase inactive BRAF"/>
</dbReference>
<dbReference type="Reactome" id="R-HSA-9649948">
    <property type="pathway name" value="Signaling downstream of RAS mutants"/>
</dbReference>
<dbReference type="Reactome" id="R-HSA-9656223">
    <property type="pathway name" value="Signaling by RAF1 mutants"/>
</dbReference>
<dbReference type="Reactome" id="R-HSA-9856530">
    <property type="pathway name" value="High laminar flow shear stress activates signaling by PIEZO1 and PECAM1:CDH5:KDR in endothelial cells"/>
</dbReference>
<dbReference type="SignaLink" id="Q9Y490"/>
<dbReference type="SIGNOR" id="Q9Y490"/>
<dbReference type="BioGRID-ORCS" id="7094">
    <property type="hits" value="447 hits in 1170 CRISPR screens"/>
</dbReference>
<dbReference type="CD-CODE" id="FB4E32DD">
    <property type="entry name" value="Presynaptic clusters and postsynaptic densities"/>
</dbReference>
<dbReference type="ChiTaRS" id="TLN1">
    <property type="organism name" value="human"/>
</dbReference>
<dbReference type="EvolutionaryTrace" id="Q9Y490"/>
<dbReference type="GeneWiki" id="TLN1"/>
<dbReference type="GenomeRNAi" id="7094"/>
<dbReference type="Pharos" id="Q9Y490">
    <property type="development level" value="Tbio"/>
</dbReference>
<dbReference type="PRO" id="PR:Q9Y490"/>
<dbReference type="Proteomes" id="UP000005640">
    <property type="component" value="Chromosome 9"/>
</dbReference>
<dbReference type="RNAct" id="Q9Y490">
    <property type="molecule type" value="protein"/>
</dbReference>
<dbReference type="Bgee" id="ENSG00000137076">
    <property type="expression patterns" value="Expressed in popliteal artery and 180 other cell types or tissues"/>
</dbReference>
<dbReference type="GO" id="GO:0005912">
    <property type="term" value="C:adherens junction"/>
    <property type="evidence" value="ECO:0000315"/>
    <property type="project" value="ARUK-UCL"/>
</dbReference>
<dbReference type="GO" id="GO:0009986">
    <property type="term" value="C:cell surface"/>
    <property type="evidence" value="ECO:0007669"/>
    <property type="project" value="UniProtKB-SubCell"/>
</dbReference>
<dbReference type="GO" id="GO:0005737">
    <property type="term" value="C:cytoplasm"/>
    <property type="evidence" value="ECO:0000318"/>
    <property type="project" value="GO_Central"/>
</dbReference>
<dbReference type="GO" id="GO:0005856">
    <property type="term" value="C:cytoskeleton"/>
    <property type="evidence" value="ECO:0007669"/>
    <property type="project" value="UniProtKB-SubCell"/>
</dbReference>
<dbReference type="GO" id="GO:0005829">
    <property type="term" value="C:cytosol"/>
    <property type="evidence" value="ECO:0000304"/>
    <property type="project" value="Reactome"/>
</dbReference>
<dbReference type="GO" id="GO:0070062">
    <property type="term" value="C:extracellular exosome"/>
    <property type="evidence" value="ECO:0007005"/>
    <property type="project" value="UniProtKB"/>
</dbReference>
<dbReference type="GO" id="GO:0005576">
    <property type="term" value="C:extracellular region"/>
    <property type="evidence" value="ECO:0000304"/>
    <property type="project" value="Reactome"/>
</dbReference>
<dbReference type="GO" id="GO:0005925">
    <property type="term" value="C:focal adhesion"/>
    <property type="evidence" value="ECO:0000314"/>
    <property type="project" value="ComplexPortal"/>
</dbReference>
<dbReference type="GO" id="GO:0005886">
    <property type="term" value="C:plasma membrane"/>
    <property type="evidence" value="ECO:0000318"/>
    <property type="project" value="GO_Central"/>
</dbReference>
<dbReference type="GO" id="GO:0001726">
    <property type="term" value="C:ruffle"/>
    <property type="evidence" value="ECO:0000250"/>
    <property type="project" value="HGNC-UCL"/>
</dbReference>
<dbReference type="GO" id="GO:0032587">
    <property type="term" value="C:ruffle membrane"/>
    <property type="evidence" value="ECO:0007669"/>
    <property type="project" value="UniProtKB-SubCell"/>
</dbReference>
<dbReference type="GO" id="GO:0051015">
    <property type="term" value="F:actin filament binding"/>
    <property type="evidence" value="ECO:0007669"/>
    <property type="project" value="InterPro"/>
</dbReference>
<dbReference type="GO" id="GO:0045296">
    <property type="term" value="F:cadherin binding"/>
    <property type="evidence" value="ECO:0007005"/>
    <property type="project" value="BHF-UCL"/>
</dbReference>
<dbReference type="GO" id="GO:0005178">
    <property type="term" value="F:integrin binding"/>
    <property type="evidence" value="ECO:0000353"/>
    <property type="project" value="UniProtKB"/>
</dbReference>
<dbReference type="GO" id="GO:0030274">
    <property type="term" value="F:LIM domain binding"/>
    <property type="evidence" value="ECO:0000353"/>
    <property type="project" value="UniProtKB"/>
</dbReference>
<dbReference type="GO" id="GO:0035091">
    <property type="term" value="F:phosphatidylinositol binding"/>
    <property type="evidence" value="ECO:0007669"/>
    <property type="project" value="Ensembl"/>
</dbReference>
<dbReference type="GO" id="GO:0001786">
    <property type="term" value="F:phosphatidylserine binding"/>
    <property type="evidence" value="ECO:0007669"/>
    <property type="project" value="Ensembl"/>
</dbReference>
<dbReference type="GO" id="GO:0005200">
    <property type="term" value="F:structural constituent of cytoskeleton"/>
    <property type="evidence" value="ECO:0007669"/>
    <property type="project" value="InterPro"/>
</dbReference>
<dbReference type="GO" id="GO:0017166">
    <property type="term" value="F:vinculin binding"/>
    <property type="evidence" value="ECO:0000353"/>
    <property type="project" value="UniProtKB"/>
</dbReference>
<dbReference type="GO" id="GO:0098609">
    <property type="term" value="P:cell-cell adhesion"/>
    <property type="evidence" value="ECO:0000318"/>
    <property type="project" value="GO_Central"/>
</dbReference>
<dbReference type="GO" id="GO:0007043">
    <property type="term" value="P:cell-cell junction assembly"/>
    <property type="evidence" value="ECO:0000304"/>
    <property type="project" value="UniProtKB"/>
</dbReference>
<dbReference type="GO" id="GO:0007044">
    <property type="term" value="P:cell-substrate junction assembly"/>
    <property type="evidence" value="ECO:0007669"/>
    <property type="project" value="Ensembl"/>
</dbReference>
<dbReference type="GO" id="GO:0030866">
    <property type="term" value="P:cortical actin cytoskeleton organization"/>
    <property type="evidence" value="ECO:0007669"/>
    <property type="project" value="Ensembl"/>
</dbReference>
<dbReference type="GO" id="GO:0043622">
    <property type="term" value="P:cortical microtubule organization"/>
    <property type="evidence" value="ECO:0007669"/>
    <property type="project" value="Ensembl"/>
</dbReference>
<dbReference type="GO" id="GO:0033622">
    <property type="term" value="P:integrin activation"/>
    <property type="evidence" value="ECO:0007669"/>
    <property type="project" value="Ensembl"/>
</dbReference>
<dbReference type="GO" id="GO:0007229">
    <property type="term" value="P:integrin-mediated signaling pathway"/>
    <property type="evidence" value="ECO:0007669"/>
    <property type="project" value="Ensembl"/>
</dbReference>
<dbReference type="GO" id="GO:0070527">
    <property type="term" value="P:platelet aggregation"/>
    <property type="evidence" value="ECO:0007001"/>
    <property type="project" value="UniProtKB"/>
</dbReference>
<dbReference type="GO" id="GO:0051893">
    <property type="term" value="P:regulation of focal adhesion assembly"/>
    <property type="evidence" value="ECO:0000303"/>
    <property type="project" value="ComplexPortal"/>
</dbReference>
<dbReference type="CDD" id="cd14473">
    <property type="entry name" value="FERM_B-lobe"/>
    <property type="match status" value="1"/>
</dbReference>
<dbReference type="CDD" id="cd10569">
    <property type="entry name" value="FERM_C_Talin"/>
    <property type="match status" value="1"/>
</dbReference>
<dbReference type="CDD" id="cd17171">
    <property type="entry name" value="FERM_F0_TLN1"/>
    <property type="match status" value="1"/>
</dbReference>
<dbReference type="CDD" id="cd17173">
    <property type="entry name" value="FERM_F1_TLN1"/>
    <property type="match status" value="1"/>
</dbReference>
<dbReference type="CDD" id="cd12150">
    <property type="entry name" value="talin-RS"/>
    <property type="match status" value="1"/>
</dbReference>
<dbReference type="FunFam" id="1.20.120.230:FF:000005">
    <property type="entry name" value="Talin 1"/>
    <property type="match status" value="1"/>
</dbReference>
<dbReference type="FunFam" id="3.10.20.90:FF:000066">
    <property type="entry name" value="Talin 1"/>
    <property type="match status" value="1"/>
</dbReference>
<dbReference type="FunFam" id="1.20.120.230:FF:000002">
    <property type="entry name" value="Talin 2"/>
    <property type="match status" value="1"/>
</dbReference>
<dbReference type="FunFam" id="1.20.120.230:FF:000003">
    <property type="entry name" value="Talin 2"/>
    <property type="match status" value="1"/>
</dbReference>
<dbReference type="FunFam" id="1.20.120.230:FF:000004">
    <property type="entry name" value="Talin 2"/>
    <property type="match status" value="1"/>
</dbReference>
<dbReference type="FunFam" id="1.20.120.230:FF:000009">
    <property type="entry name" value="Talin 2"/>
    <property type="match status" value="1"/>
</dbReference>
<dbReference type="FunFam" id="1.20.1410.10:FF:000001">
    <property type="entry name" value="Talin 2"/>
    <property type="match status" value="1"/>
</dbReference>
<dbReference type="FunFam" id="1.20.1420.10:FF:000001">
    <property type="entry name" value="Talin 2"/>
    <property type="match status" value="1"/>
</dbReference>
<dbReference type="FunFam" id="1.20.1420.10:FF:000002">
    <property type="entry name" value="Talin 2"/>
    <property type="match status" value="1"/>
</dbReference>
<dbReference type="FunFam" id="1.20.1420.10:FF:000004">
    <property type="entry name" value="Talin 2"/>
    <property type="match status" value="1"/>
</dbReference>
<dbReference type="FunFam" id="1.20.1420.10:FF:000005">
    <property type="entry name" value="Talin 2"/>
    <property type="match status" value="1"/>
</dbReference>
<dbReference type="FunFam" id="1.20.1420.10:FF:000006">
    <property type="entry name" value="Talin 2"/>
    <property type="match status" value="1"/>
</dbReference>
<dbReference type="FunFam" id="1.20.1420.10:FF:000007">
    <property type="entry name" value="Talin 2"/>
    <property type="match status" value="1"/>
</dbReference>
<dbReference type="FunFam" id="1.20.80.10:FF:000007">
    <property type="entry name" value="Talin 2"/>
    <property type="match status" value="1"/>
</dbReference>
<dbReference type="FunFam" id="2.30.29.30:FF:000028">
    <property type="entry name" value="Talin 2"/>
    <property type="match status" value="1"/>
</dbReference>
<dbReference type="FunFam" id="3.10.20.90:FF:000028">
    <property type="entry name" value="Talin 2"/>
    <property type="match status" value="1"/>
</dbReference>
<dbReference type="Gene3D" id="1.20.80.10">
    <property type="match status" value="1"/>
</dbReference>
<dbReference type="Gene3D" id="1.20.120.230">
    <property type="entry name" value="Alpha-catenin/vinculin-like"/>
    <property type="match status" value="5"/>
</dbReference>
<dbReference type="Gene3D" id="1.20.1410.10">
    <property type="entry name" value="I/LWEQ domain"/>
    <property type="match status" value="1"/>
</dbReference>
<dbReference type="Gene3D" id="3.10.20.90">
    <property type="entry name" value="Phosphatidylinositol 3-kinase Catalytic Subunit, Chain A, domain 1"/>
    <property type="match status" value="3"/>
</dbReference>
<dbReference type="Gene3D" id="2.30.29.30">
    <property type="entry name" value="Pleckstrin-homology domain (PH domain)/Phosphotyrosine-binding domain (PTB)"/>
    <property type="match status" value="1"/>
</dbReference>
<dbReference type="Gene3D" id="1.20.1420.10">
    <property type="entry name" value="Talin, central domain"/>
    <property type="match status" value="7"/>
</dbReference>
<dbReference type="InterPro" id="IPR036723">
    <property type="entry name" value="Alpha-catenin/vinculin-like_sf"/>
</dbReference>
<dbReference type="InterPro" id="IPR019749">
    <property type="entry name" value="Band_41_domain"/>
</dbReference>
<dbReference type="InterPro" id="IPR014352">
    <property type="entry name" value="FERM/acyl-CoA-bd_prot_sf"/>
</dbReference>
<dbReference type="InterPro" id="IPR035963">
    <property type="entry name" value="FERM_2"/>
</dbReference>
<dbReference type="InterPro" id="IPR019748">
    <property type="entry name" value="FERM_central"/>
</dbReference>
<dbReference type="InterPro" id="IPR019747">
    <property type="entry name" value="FERM_CS"/>
</dbReference>
<dbReference type="InterPro" id="IPR000299">
    <property type="entry name" value="FERM_domain"/>
</dbReference>
<dbReference type="InterPro" id="IPR032425">
    <property type="entry name" value="FERM_f0"/>
</dbReference>
<dbReference type="InterPro" id="IPR035964">
    <property type="entry name" value="I/LWEQ_dom_sf"/>
</dbReference>
<dbReference type="InterPro" id="IPR002558">
    <property type="entry name" value="ILWEQ_dom"/>
</dbReference>
<dbReference type="InterPro" id="IPR002404">
    <property type="entry name" value="IRS_PTB"/>
</dbReference>
<dbReference type="InterPro" id="IPR011993">
    <property type="entry name" value="PH-like_dom_sf"/>
</dbReference>
<dbReference type="InterPro" id="IPR037438">
    <property type="entry name" value="Talin1/2-RS"/>
</dbReference>
<dbReference type="InterPro" id="IPR015224">
    <property type="entry name" value="Talin_cent"/>
</dbReference>
<dbReference type="InterPro" id="IPR036476">
    <property type="entry name" value="Talin_cent_sf"/>
</dbReference>
<dbReference type="InterPro" id="IPR054082">
    <property type="entry name" value="Talin_IBS2B"/>
</dbReference>
<dbReference type="InterPro" id="IPR049108">
    <property type="entry name" value="Talin_R4"/>
</dbReference>
<dbReference type="InterPro" id="IPR054060">
    <property type="entry name" value="TLN1-like_RS"/>
</dbReference>
<dbReference type="InterPro" id="IPR029071">
    <property type="entry name" value="Ubiquitin-like_domsf"/>
</dbReference>
<dbReference type="InterPro" id="IPR015009">
    <property type="entry name" value="Vinculin-bd_dom"/>
</dbReference>
<dbReference type="PANTHER" id="PTHR19981">
    <property type="entry name" value="TALIN"/>
    <property type="match status" value="1"/>
</dbReference>
<dbReference type="PANTHER" id="PTHR19981:SF7">
    <property type="entry name" value="TALIN-1"/>
    <property type="match status" value="1"/>
</dbReference>
<dbReference type="Pfam" id="PF16511">
    <property type="entry name" value="FERM_f0"/>
    <property type="match status" value="1"/>
</dbReference>
<dbReference type="Pfam" id="PF00373">
    <property type="entry name" value="FERM_M"/>
    <property type="match status" value="1"/>
</dbReference>
<dbReference type="Pfam" id="PF01608">
    <property type="entry name" value="I_LWEQ"/>
    <property type="match status" value="1"/>
</dbReference>
<dbReference type="Pfam" id="PF02174">
    <property type="entry name" value="IRS"/>
    <property type="match status" value="1"/>
</dbReference>
<dbReference type="Pfam" id="PF21896">
    <property type="entry name" value="Talin_IBS2B"/>
    <property type="match status" value="4"/>
</dbReference>
<dbReference type="Pfam" id="PF09141">
    <property type="entry name" value="Talin_middle"/>
    <property type="match status" value="1"/>
</dbReference>
<dbReference type="Pfam" id="PF21692">
    <property type="entry name" value="Talin_R4"/>
    <property type="match status" value="1"/>
</dbReference>
<dbReference type="Pfam" id="PF25177">
    <property type="entry name" value="Talin_VBS2"/>
    <property type="match status" value="1"/>
</dbReference>
<dbReference type="Pfam" id="PF21865">
    <property type="entry name" value="TLN1-like_RS"/>
    <property type="match status" value="3"/>
</dbReference>
<dbReference type="Pfam" id="PF08913">
    <property type="entry name" value="VBS"/>
    <property type="match status" value="1"/>
</dbReference>
<dbReference type="SMART" id="SM00295">
    <property type="entry name" value="B41"/>
    <property type="match status" value="1"/>
</dbReference>
<dbReference type="SMART" id="SM00307">
    <property type="entry name" value="ILWEQ"/>
    <property type="match status" value="1"/>
</dbReference>
<dbReference type="SMART" id="SM01244">
    <property type="entry name" value="IRS"/>
    <property type="match status" value="1"/>
</dbReference>
<dbReference type="SUPFAM" id="SSF109880">
    <property type="entry name" value="A middle domain of Talin 1"/>
    <property type="match status" value="1"/>
</dbReference>
<dbReference type="SUPFAM" id="SSF47220">
    <property type="entry name" value="alpha-catenin/vinculin-like"/>
    <property type="match status" value="5"/>
</dbReference>
<dbReference type="SUPFAM" id="SSF109885">
    <property type="entry name" value="I/LWEQ domain"/>
    <property type="match status" value="4"/>
</dbReference>
<dbReference type="SUPFAM" id="SSF50729">
    <property type="entry name" value="PH domain-like"/>
    <property type="match status" value="1"/>
</dbReference>
<dbReference type="SUPFAM" id="SSF47031">
    <property type="entry name" value="Second domain of FERM"/>
    <property type="match status" value="1"/>
</dbReference>
<dbReference type="SUPFAM" id="SSF54236">
    <property type="entry name" value="Ubiquitin-like"/>
    <property type="match status" value="1"/>
</dbReference>
<dbReference type="PROSITE" id="PS00660">
    <property type="entry name" value="FERM_1"/>
    <property type="match status" value="1"/>
</dbReference>
<dbReference type="PROSITE" id="PS00661">
    <property type="entry name" value="FERM_2"/>
    <property type="match status" value="1"/>
</dbReference>
<dbReference type="PROSITE" id="PS50057">
    <property type="entry name" value="FERM_3"/>
    <property type="match status" value="1"/>
</dbReference>
<dbReference type="PROSITE" id="PS50945">
    <property type="entry name" value="I_LWEQ"/>
    <property type="match status" value="1"/>
</dbReference>
<reference key="1">
    <citation type="submission" date="1998-07" db="EMBL/GenBank/DDBJ databases">
        <title>Complete cDNA sequence of human talin.</title>
        <authorList>
            <person name="Mao L."/>
            <person name="Fan Y.H."/>
        </authorList>
    </citation>
    <scope>NUCLEOTIDE SEQUENCE [MRNA] (ISOFORM 1)</scope>
    <scope>VARIANT LEU-1227</scope>
</reference>
<reference key="2">
    <citation type="journal article" date="1999" name="Genomics">
        <title>Characterization of the human talin (TLN) gene: genomic structure, chromosomal localization, and expression pattern.</title>
        <authorList>
            <person name="Ben-Yosef T."/>
            <person name="Francomano C.A."/>
        </authorList>
    </citation>
    <scope>NUCLEOTIDE SEQUENCE [GENOMIC DNA / MRNA]</scope>
</reference>
<reference key="3">
    <citation type="journal article" date="1999" name="DNA Res.">
        <title>Prediction of the coding sequences of unidentified human genes. XIV. The complete sequences of 100 new cDNA clones from brain which code for large proteins in vitro.</title>
        <authorList>
            <person name="Kikuno R."/>
            <person name="Nagase T."/>
            <person name="Ishikawa K."/>
            <person name="Hirosawa M."/>
            <person name="Miyajima N."/>
            <person name="Tanaka A."/>
            <person name="Kotani H."/>
            <person name="Nomura N."/>
            <person name="Ohara O."/>
        </authorList>
    </citation>
    <scope>NUCLEOTIDE SEQUENCE [LARGE SCALE MRNA] (ISOFORM 1)</scope>
    <source>
        <tissue>Brain</tissue>
    </source>
</reference>
<reference key="4">
    <citation type="journal article" date="2002" name="DNA Res.">
        <title>Construction of expression-ready cDNA clones for KIAA genes: manual curation of 330 KIAA cDNA clones.</title>
        <authorList>
            <person name="Nakajima D."/>
            <person name="Okazaki N."/>
            <person name="Yamakawa H."/>
            <person name="Kikuno R."/>
            <person name="Ohara O."/>
            <person name="Nagase T."/>
        </authorList>
    </citation>
    <scope>SEQUENCE REVISION</scope>
</reference>
<reference key="5">
    <citation type="journal article" date="2017" name="Funct. Integr. Genomics">
        <title>Transcriptome profile of the human placenta.</title>
        <authorList>
            <person name="Majewska M."/>
            <person name="Lipka A."/>
            <person name="Paukszto L."/>
            <person name="Jastrzebski J.P."/>
            <person name="Myszczynski K."/>
            <person name="Gowkielewicz M."/>
            <person name="Jozwik M."/>
            <person name="Majewski M.K."/>
        </authorList>
    </citation>
    <scope>NUCLEOTIDE SEQUENCE [MRNA] (ISOFORM 2)</scope>
    <source>
        <tissue>Placenta</tissue>
    </source>
</reference>
<reference key="6">
    <citation type="journal article" date="2004" name="Nature">
        <title>DNA sequence and analysis of human chromosome 9.</title>
        <authorList>
            <person name="Humphray S.J."/>
            <person name="Oliver K."/>
            <person name="Hunt A.R."/>
            <person name="Plumb R.W."/>
            <person name="Loveland J.E."/>
            <person name="Howe K.L."/>
            <person name="Andrews T.D."/>
            <person name="Searle S."/>
            <person name="Hunt S.E."/>
            <person name="Scott C.E."/>
            <person name="Jones M.C."/>
            <person name="Ainscough R."/>
            <person name="Almeida J.P."/>
            <person name="Ambrose K.D."/>
            <person name="Ashwell R.I.S."/>
            <person name="Babbage A.K."/>
            <person name="Babbage S."/>
            <person name="Bagguley C.L."/>
            <person name="Bailey J."/>
            <person name="Banerjee R."/>
            <person name="Barker D.J."/>
            <person name="Barlow K.F."/>
            <person name="Bates K."/>
            <person name="Beasley H."/>
            <person name="Beasley O."/>
            <person name="Bird C.P."/>
            <person name="Bray-Allen S."/>
            <person name="Brown A.J."/>
            <person name="Brown J.Y."/>
            <person name="Burford D."/>
            <person name="Burrill W."/>
            <person name="Burton J."/>
            <person name="Carder C."/>
            <person name="Carter N.P."/>
            <person name="Chapman J.C."/>
            <person name="Chen Y."/>
            <person name="Clarke G."/>
            <person name="Clark S.Y."/>
            <person name="Clee C.M."/>
            <person name="Clegg S."/>
            <person name="Collier R.E."/>
            <person name="Corby N."/>
            <person name="Crosier M."/>
            <person name="Cummings A.T."/>
            <person name="Davies J."/>
            <person name="Dhami P."/>
            <person name="Dunn M."/>
            <person name="Dutta I."/>
            <person name="Dyer L.W."/>
            <person name="Earthrowl M.E."/>
            <person name="Faulkner L."/>
            <person name="Fleming C.J."/>
            <person name="Frankish A."/>
            <person name="Frankland J.A."/>
            <person name="French L."/>
            <person name="Fricker D.G."/>
            <person name="Garner P."/>
            <person name="Garnett J."/>
            <person name="Ghori J."/>
            <person name="Gilbert J.G.R."/>
            <person name="Glison C."/>
            <person name="Grafham D.V."/>
            <person name="Gribble S."/>
            <person name="Griffiths C."/>
            <person name="Griffiths-Jones S."/>
            <person name="Grocock R."/>
            <person name="Guy J."/>
            <person name="Hall R.E."/>
            <person name="Hammond S."/>
            <person name="Harley J.L."/>
            <person name="Harrison E.S.I."/>
            <person name="Hart E.A."/>
            <person name="Heath P.D."/>
            <person name="Henderson C.D."/>
            <person name="Hopkins B.L."/>
            <person name="Howard P.J."/>
            <person name="Howden P.J."/>
            <person name="Huckle E."/>
            <person name="Johnson C."/>
            <person name="Johnson D."/>
            <person name="Joy A.A."/>
            <person name="Kay M."/>
            <person name="Keenan S."/>
            <person name="Kershaw J.K."/>
            <person name="Kimberley A.M."/>
            <person name="King A."/>
            <person name="Knights A."/>
            <person name="Laird G.K."/>
            <person name="Langford C."/>
            <person name="Lawlor S."/>
            <person name="Leongamornlert D.A."/>
            <person name="Leversha M."/>
            <person name="Lloyd C."/>
            <person name="Lloyd D.M."/>
            <person name="Lovell J."/>
            <person name="Martin S."/>
            <person name="Mashreghi-Mohammadi M."/>
            <person name="Matthews L."/>
            <person name="McLaren S."/>
            <person name="McLay K.E."/>
            <person name="McMurray A."/>
            <person name="Milne S."/>
            <person name="Nickerson T."/>
            <person name="Nisbett J."/>
            <person name="Nordsiek G."/>
            <person name="Pearce A.V."/>
            <person name="Peck A.I."/>
            <person name="Porter K.M."/>
            <person name="Pandian R."/>
            <person name="Pelan S."/>
            <person name="Phillimore B."/>
            <person name="Povey S."/>
            <person name="Ramsey Y."/>
            <person name="Rand V."/>
            <person name="Scharfe M."/>
            <person name="Sehra H.K."/>
            <person name="Shownkeen R."/>
            <person name="Sims S.K."/>
            <person name="Skuce C.D."/>
            <person name="Smith M."/>
            <person name="Steward C.A."/>
            <person name="Swarbreck D."/>
            <person name="Sycamore N."/>
            <person name="Tester J."/>
            <person name="Thorpe A."/>
            <person name="Tracey A."/>
            <person name="Tromans A."/>
            <person name="Thomas D.W."/>
            <person name="Wall M."/>
            <person name="Wallis J.M."/>
            <person name="West A.P."/>
            <person name="Whitehead S.L."/>
            <person name="Willey D.L."/>
            <person name="Williams S.A."/>
            <person name="Wilming L."/>
            <person name="Wray P.W."/>
            <person name="Young L."/>
            <person name="Ashurst J.L."/>
            <person name="Coulson A."/>
            <person name="Blocker H."/>
            <person name="Durbin R.M."/>
            <person name="Sulston J.E."/>
            <person name="Hubbard T."/>
            <person name="Jackson M.J."/>
            <person name="Bentley D.R."/>
            <person name="Beck S."/>
            <person name="Rogers J."/>
            <person name="Dunham I."/>
        </authorList>
    </citation>
    <scope>NUCLEOTIDE SEQUENCE [LARGE SCALE GENOMIC DNA]</scope>
</reference>
<reference key="7">
    <citation type="submission" date="2005-09" db="EMBL/GenBank/DDBJ databases">
        <authorList>
            <person name="Mural R.J."/>
            <person name="Istrail S."/>
            <person name="Sutton G.G."/>
            <person name="Florea L."/>
            <person name="Halpern A.L."/>
            <person name="Mobarry C.M."/>
            <person name="Lippert R."/>
            <person name="Walenz B."/>
            <person name="Shatkay H."/>
            <person name="Dew I."/>
            <person name="Miller J.R."/>
            <person name="Flanigan M.J."/>
            <person name="Edwards N.J."/>
            <person name="Bolanos R."/>
            <person name="Fasulo D."/>
            <person name="Halldorsson B.V."/>
            <person name="Hannenhalli S."/>
            <person name="Turner R."/>
            <person name="Yooseph S."/>
            <person name="Lu F."/>
            <person name="Nusskern D.R."/>
            <person name="Shue B.C."/>
            <person name="Zheng X.H."/>
            <person name="Zhong F."/>
            <person name="Delcher A.L."/>
            <person name="Huson D.H."/>
            <person name="Kravitz S.A."/>
            <person name="Mouchard L."/>
            <person name="Reinert K."/>
            <person name="Remington K.A."/>
            <person name="Clark A.G."/>
            <person name="Waterman M.S."/>
            <person name="Eichler E.E."/>
            <person name="Adams M.D."/>
            <person name="Hunkapiller M.W."/>
            <person name="Myers E.W."/>
            <person name="Venter J.C."/>
        </authorList>
    </citation>
    <scope>NUCLEOTIDE SEQUENCE [LARGE SCALE GENOMIC DNA]</scope>
</reference>
<reference key="8">
    <citation type="journal article" date="2004" name="Genome Res.">
        <title>The status, quality, and expansion of the NIH full-length cDNA project: the Mammalian Gene Collection (MGC).</title>
        <authorList>
            <consortium name="The MGC Project Team"/>
        </authorList>
    </citation>
    <scope>NUCLEOTIDE SEQUENCE [LARGE SCALE MRNA] (ISOFORM 1)</scope>
    <scope>VARIANT TRP-1919</scope>
    <source>
        <tissue>Embryonic carcinoma</tissue>
    </source>
</reference>
<reference key="9">
    <citation type="submission" date="2005-11" db="UniProtKB">
        <authorList>
            <person name="Bienvenut W.V."/>
            <person name="Claeys D."/>
        </authorList>
    </citation>
    <scope>PROTEIN SEQUENCE OF 8-15; 34-82; 99-106; 119-131; 138-146; 148-156; 165-178; 182-194; 197-234; 257-268; 307-316; 344-358; 428-438; 442-454; 593-634; 674-685; 722-741; 766-824; 828-854; 862-869; 876-910; 923-943; 958-999; 1026-1035; 1076-1086; 1097-1122; 1130-1184; 1191-1198; 1208-1214; 1223-1269; 1274-1306; 1321-1340; 1362-1368; 1402-1431; 1531-1541; 1560-1646; 1674-1780; 1863-1917; 1961-1973; 2007-2016; 2025-2057; 2064-2085; 2090-2099; 2105-2115; 2120-2130; 2134-2141; 2145-2154; 2169-2177; 2198-2209; 2221-2233; 2267-2274; 2276-2321; 2322-2329; 2334-2361; 2369-2398; 2430-2443; 2456-2472; 2477-2491; 2494-2510 AND 2512-2519</scope>
    <scope>IDENTIFICATION BY MASS SPECTROMETRY</scope>
    <source>
        <tissue>Platelet</tissue>
    </source>
</reference>
<reference key="10">
    <citation type="journal article" date="1999" name="Biochemistry">
        <title>Molecular interactions of N-RAP, a nebulin-related protein of striated muscle myotendon junctions and intercalated disks.</title>
        <authorList>
            <person name="Luo G."/>
            <person name="Herrera A.H."/>
            <person name="Horowits R."/>
        </authorList>
    </citation>
    <scope>INTERACTION WITH NRAP</scope>
</reference>
<reference key="11">
    <citation type="journal article" date="2002" name="Nature">
        <title>Type I gamma phosphatidylinositol phosphate kinase targets and regulates focal adhesions.</title>
        <authorList>
            <person name="Ling K."/>
            <person name="Doughman R.L."/>
            <person name="Firestone A.J."/>
            <person name="Bunce M.W."/>
            <person name="Anderson R.A."/>
        </authorList>
    </citation>
    <scope>INTERACTION WITH PIP5K1C</scope>
</reference>
<reference key="12">
    <citation type="journal article" date="2003" name="J. Biol. Chem.">
        <title>Disruption of focal adhesions by integrin cytoplasmic domain-associated protein-1 alpha.</title>
        <authorList>
            <person name="Bouvard D."/>
            <person name="Vignoud L."/>
            <person name="Dupe-Manet S."/>
            <person name="Abed N."/>
            <person name="Fournier H.N."/>
            <person name="Vincent-Monegat C."/>
            <person name="Retta S.F."/>
            <person name="Fassler R."/>
            <person name="Block M.R."/>
        </authorList>
    </citation>
    <scope>INTERACTION WITH ITGB1</scope>
</reference>
<reference key="13">
    <citation type="journal article" date="2006" name="Cell">
        <title>Global, in vivo, and site-specific phosphorylation dynamics in signaling networks.</title>
        <authorList>
            <person name="Olsen J.V."/>
            <person name="Blagoev B."/>
            <person name="Gnad F."/>
            <person name="Macek B."/>
            <person name="Kumar C."/>
            <person name="Mortensen P."/>
            <person name="Mann M."/>
        </authorList>
    </citation>
    <scope>IDENTIFICATION BY MASS SPECTROMETRY [LARGE SCALE ANALYSIS]</scope>
    <source>
        <tissue>Cervix carcinoma</tissue>
    </source>
</reference>
<reference key="14">
    <citation type="journal article" date="2008" name="Exp. Cell Res.">
        <title>Identification of a repeated domain within mammalian alpha-synemin that interacts directly with talin.</title>
        <authorList>
            <person name="Sun N."/>
            <person name="Critchley D.R."/>
            <person name="Paulin D."/>
            <person name="Li Z."/>
            <person name="Robson R.M."/>
        </authorList>
    </citation>
    <scope>INTERACTION WITH SYNM</scope>
</reference>
<reference key="15">
    <citation type="journal article" date="2008" name="J. Proteome Res.">
        <title>Phosphoproteome of resting human platelets.</title>
        <authorList>
            <person name="Zahedi R.P."/>
            <person name="Lewandrowski U."/>
            <person name="Wiesner J."/>
            <person name="Wortelkamp S."/>
            <person name="Moebius J."/>
            <person name="Schuetz C."/>
            <person name="Walter U."/>
            <person name="Gambaryan S."/>
            <person name="Sickmann A."/>
        </authorList>
    </citation>
    <scope>IDENTIFICATION BY MASS SPECTROMETRY [LARGE SCALE ANALYSIS]</scope>
    <source>
        <tissue>Platelet</tissue>
    </source>
</reference>
<reference key="16">
    <citation type="journal article" date="2008" name="Proc. Natl. Acad. Sci. U.S.A.">
        <title>A quantitative atlas of mitotic phosphorylation.</title>
        <authorList>
            <person name="Dephoure N."/>
            <person name="Zhou C."/>
            <person name="Villen J."/>
            <person name="Beausoleil S.A."/>
            <person name="Bakalarski C.E."/>
            <person name="Elledge S.J."/>
            <person name="Gygi S.P."/>
        </authorList>
    </citation>
    <scope>PHOSPHORYLATION [LARGE SCALE ANALYSIS] AT SER-425</scope>
    <scope>IDENTIFICATION BY MASS SPECTROMETRY [LARGE SCALE ANALYSIS]</scope>
    <source>
        <tissue>Cervix carcinoma</tissue>
    </source>
</reference>
<reference key="17">
    <citation type="journal article" date="2009" name="Sci. Signal.">
        <title>Quantitative phosphoproteomic analysis of T cell receptor signaling reveals system-wide modulation of protein-protein interactions.</title>
        <authorList>
            <person name="Mayya V."/>
            <person name="Lundgren D.H."/>
            <person name="Hwang S.-I."/>
            <person name="Rezaul K."/>
            <person name="Wu L."/>
            <person name="Eng J.K."/>
            <person name="Rodionov V."/>
            <person name="Han D.K."/>
        </authorList>
    </citation>
    <scope>PHOSPHORYLATION [LARGE SCALE ANALYSIS] AT SER-425</scope>
    <scope>IDENTIFICATION BY MASS SPECTROMETRY [LARGE SCALE ANALYSIS]</scope>
    <source>
        <tissue>Leukemic T-cell</tissue>
    </source>
</reference>
<reference key="18">
    <citation type="journal article" date="2009" name="Science">
        <title>Lysine acetylation targets protein complexes and co-regulates major cellular functions.</title>
        <authorList>
            <person name="Choudhary C."/>
            <person name="Kumar C."/>
            <person name="Gnad F."/>
            <person name="Nielsen M.L."/>
            <person name="Rehman M."/>
            <person name="Walther T.C."/>
            <person name="Olsen J.V."/>
            <person name="Mann M."/>
        </authorList>
    </citation>
    <scope>ACETYLATION [LARGE SCALE ANALYSIS] AT LYS-2031 AND LYS-2115</scope>
    <scope>IDENTIFICATION BY MASS SPECTROMETRY [LARGE SCALE ANALYSIS]</scope>
</reference>
<reference key="19">
    <citation type="journal article" date="2010" name="Sci. Signal.">
        <title>Quantitative phosphoproteomics reveals widespread full phosphorylation site occupancy during mitosis.</title>
        <authorList>
            <person name="Olsen J.V."/>
            <person name="Vermeulen M."/>
            <person name="Santamaria A."/>
            <person name="Kumar C."/>
            <person name="Miller M.L."/>
            <person name="Jensen L.J."/>
            <person name="Gnad F."/>
            <person name="Cox J."/>
            <person name="Jensen T.S."/>
            <person name="Nigg E.A."/>
            <person name="Brunak S."/>
            <person name="Mann M."/>
        </authorList>
    </citation>
    <scope>PHOSPHORYLATION [LARGE SCALE ANALYSIS] AT SER-425</scope>
    <scope>IDENTIFICATION BY MASS SPECTROMETRY [LARGE SCALE ANALYSIS]</scope>
    <source>
        <tissue>Cervix carcinoma</tissue>
    </source>
</reference>
<reference key="20">
    <citation type="journal article" date="2011" name="BMC Syst. Biol.">
        <title>Initial characterization of the human central proteome.</title>
        <authorList>
            <person name="Burkard T.R."/>
            <person name="Planyavsky M."/>
            <person name="Kaupe I."/>
            <person name="Breitwieser F.P."/>
            <person name="Buerckstuemmer T."/>
            <person name="Bennett K.L."/>
            <person name="Superti-Furga G."/>
            <person name="Colinge J."/>
        </authorList>
    </citation>
    <scope>IDENTIFICATION BY MASS SPECTROMETRY [LARGE SCALE ANALYSIS]</scope>
</reference>
<reference key="21">
    <citation type="journal article" date="2011" name="J. Cell Biol.">
        <title>Osteoblast mineralization requires beta1 integrin/ICAP-1-dependent fibronectin deposition.</title>
        <authorList>
            <person name="Brunner M."/>
            <person name="Millon-Fremillon A."/>
            <person name="Chevalier G."/>
            <person name="Nakchbandi I.A."/>
            <person name="Mosher D."/>
            <person name="Block M.R."/>
            <person name="Albiges-Rizo C."/>
            <person name="Bouvard D."/>
        </authorList>
    </citation>
    <scope>INTERACTION WITH ITGB1</scope>
</reference>
<reference key="22">
    <citation type="journal article" date="2011" name="Sci. Signal.">
        <title>System-wide temporal characterization of the proteome and phosphoproteome of human embryonic stem cell differentiation.</title>
        <authorList>
            <person name="Rigbolt K.T."/>
            <person name="Prokhorova T.A."/>
            <person name="Akimov V."/>
            <person name="Henningsen J."/>
            <person name="Johansen P.T."/>
            <person name="Kratchmarova I."/>
            <person name="Kassem M."/>
            <person name="Mann M."/>
            <person name="Olsen J.V."/>
            <person name="Blagoev B."/>
        </authorList>
    </citation>
    <scope>PHOSPHORYLATION [LARGE SCALE ANALYSIS] AT SER-2040</scope>
    <scope>IDENTIFICATION BY MASS SPECTROMETRY [LARGE SCALE ANALYSIS]</scope>
</reference>
<reference key="23">
    <citation type="journal article" date="2013" name="J. Proteome Res.">
        <title>Toward a comprehensive characterization of a human cancer cell phosphoproteome.</title>
        <authorList>
            <person name="Zhou H."/>
            <person name="Di Palma S."/>
            <person name="Preisinger C."/>
            <person name="Peng M."/>
            <person name="Polat A.N."/>
            <person name="Heck A.J."/>
            <person name="Mohammed S."/>
        </authorList>
    </citation>
    <scope>PHOSPHORYLATION [LARGE SCALE ANALYSIS] AT THR-167 AND SER-425</scope>
    <scope>IDENTIFICATION BY MASS SPECTROMETRY [LARGE SCALE ANALYSIS]</scope>
    <source>
        <tissue>Cervix carcinoma</tissue>
        <tissue>Erythroleukemia</tissue>
    </source>
</reference>
<reference key="24">
    <citation type="journal article" date="2014" name="Cell Host Microbe">
        <title>HCMV pUL135 remodels the actin cytoskeleton to impair immune recognition of infected cells.</title>
        <authorList>
            <person name="Stanton R.J."/>
            <person name="Prod'homme V."/>
            <person name="Purbhoo M.A."/>
            <person name="Moore M."/>
            <person name="Aicheler R.J."/>
            <person name="Heinzmann M."/>
            <person name="Bailer S.M."/>
            <person name="Haas J."/>
            <person name="Antrobus R."/>
            <person name="Weekes M.P."/>
            <person name="Lehner P.J."/>
            <person name="Vojtesek B."/>
            <person name="Miners K.L."/>
            <person name="Man S."/>
            <person name="Wilkie G.S."/>
            <person name="Davison A.J."/>
            <person name="Wang E.C."/>
            <person name="Tomasec P."/>
            <person name="Wilkinson G.W."/>
        </authorList>
    </citation>
    <scope>INTERACTION WITH HUMAN CYTOMEGALOVIRUS PROTEIN UL135</scope>
</reference>
<reference key="25">
    <citation type="journal article" date="2014" name="J. Proteomics">
        <title>An enzyme assisted RP-RPLC approach for in-depth analysis of human liver phosphoproteome.</title>
        <authorList>
            <person name="Bian Y."/>
            <person name="Song C."/>
            <person name="Cheng K."/>
            <person name="Dong M."/>
            <person name="Wang F."/>
            <person name="Huang J."/>
            <person name="Sun D."/>
            <person name="Wang L."/>
            <person name="Ye M."/>
            <person name="Zou H."/>
        </authorList>
    </citation>
    <scope>PHOSPHORYLATION [LARGE SCALE ANALYSIS] AT SER-405; SER-1021; THR-1142; SER-1201; SER-1225; THR-1263; SER-1323; SER-1849; THR-1855 AND SER-2040</scope>
    <scope>IDENTIFICATION BY MASS SPECTROMETRY [LARGE SCALE ANALYSIS]</scope>
    <source>
        <tissue>Liver</tissue>
    </source>
</reference>
<reference key="26">
    <citation type="journal article" date="2015" name="Proteomics">
        <title>N-terminome analysis of the human mitochondrial proteome.</title>
        <authorList>
            <person name="Vaca Jacome A.S."/>
            <person name="Rabilloud T."/>
            <person name="Schaeffer-Reiss C."/>
            <person name="Rompais M."/>
            <person name="Ayoub D."/>
            <person name="Lane L."/>
            <person name="Bairoch A."/>
            <person name="Van Dorsselaer A."/>
            <person name="Carapito C."/>
        </authorList>
    </citation>
    <scope>IDENTIFICATION BY MASS SPECTROMETRY [LARGE SCALE ANALYSIS]</scope>
</reference>
<reference key="27">
    <citation type="journal article" date="2016" name="Stroke">
        <title>THSD1 (thrombospondin type 1 domain containing protein 1) mutation in the pathogenesis of intracranial aneurysm and subarachnoid emorrhage.</title>
        <authorList>
            <person name="Santiago-Sim T."/>
            <person name="Fang X."/>
            <person name="Hennessy M.L."/>
            <person name="Nalbach S.V."/>
            <person name="DePalma S.R."/>
            <person name="Lee M.S."/>
            <person name="Greenway S.C."/>
            <person name="McDonough B."/>
            <person name="Hergenroeder G.W."/>
            <person name="Patek K.J."/>
            <person name="Colosimo S.M."/>
            <person name="Qualmann K.J."/>
            <person name="Hagan J.P."/>
            <person name="Milewicz D.M."/>
            <person name="MacRae C.A."/>
            <person name="Dymecki S.M."/>
            <person name="Seidman C.E."/>
            <person name="Seidman J.G."/>
            <person name="Kim D.H."/>
        </authorList>
    </citation>
    <scope>INTERACTION WITH THSD1</scope>
</reference>
<reference key="28">
    <citation type="journal article" date="2016" name="Stroke">
        <title>THSD1 (thrombospondin type 1 domain containing protein 1) mutation in the pathogenesis of intracranial aneurysm and subarachnoid emorrhage.</title>
        <authorList>
            <person name="Santiago-Sim T."/>
            <person name="Fang X."/>
            <person name="Hennessy M.L."/>
            <person name="Nalbach S.V."/>
            <person name="DePalma S.R."/>
            <person name="Lee M.S."/>
            <person name="Greenway S.C."/>
            <person name="McDonough B."/>
            <person name="Hergenroeder G.W."/>
            <person name="Patek K.J."/>
            <person name="Colosimo S.M."/>
            <person name="Qualmann K.J."/>
            <person name="Hagan J.P."/>
            <person name="Milewicz D.M."/>
            <person name="MacRae C.A."/>
            <person name="Dymecki S.M."/>
            <person name="Seidman C.E."/>
            <person name="Seidman J.G."/>
            <person name="Kim D.H."/>
        </authorList>
    </citation>
    <scope>ERRATUM OF PUBMED:27895300</scope>
</reference>
<reference key="29">
    <citation type="journal article" date="2017" name="Cell. Physiol. Biochem.">
        <title>The Intracranial Aneurysm Gene THSD1 Connects Endosome Dynamics to Nascent Focal Adhesion Assembly.</title>
        <authorList>
            <person name="Rui Y.N."/>
            <person name="Xu Z."/>
            <person name="Fang X."/>
            <person name="Menezes M.R."/>
            <person name="Balzeau J."/>
            <person name="Niu A."/>
            <person name="Hagan J.P."/>
            <person name="Kim D.H."/>
        </authorList>
    </citation>
    <scope>INTERACTION WITH THSD1</scope>
</reference>
<reference key="30">
    <citation type="journal article" date="2023" name="J. Cell Biol.">
        <title>TLN1 contains a cancer-associated cassette exon that alters talin-1 mechanosensitivity.</title>
        <authorList>
            <person name="Gallego-Paez L.M."/>
            <person name="Edwards W.J.S."/>
            <person name="Chanduri M."/>
            <person name="Guo Y."/>
            <person name="Koorman T."/>
            <person name="Lee C.Y."/>
            <person name="Grexa N."/>
            <person name="Derksen P."/>
            <person name="Yan J."/>
            <person name="Schwartz M.A."/>
            <person name="Mauer J."/>
            <person name="Goult B.T."/>
        </authorList>
    </citation>
    <scope>ALTERNATIVE SPLICING</scope>
    <scope>INTERACTION WITH VCL AND APBB1IP (ISOFORMS 1 AND 2)</scope>
    <scope>INDUCTION (ISOFORM 1)</scope>
    <scope>TISSUE SPECIFICITY (ISOFORM 2)</scope>
</reference>
<reference key="31">
    <citation type="journal article" date="2004" name="J. Biol. Chem.">
        <title>Structural basis for amplifying vinculin activation by talin.</title>
        <authorList>
            <person name="Izard T."/>
            <person name="Vonrhein C."/>
        </authorList>
    </citation>
    <scope>X-RAY CRYSTALLOGRAPHY (2.42 ANGSTROMS) OF 607-631 IN COMPLEX WITH VCL</scope>
</reference>
<evidence type="ECO:0000250" key="1"/>
<evidence type="ECO:0000250" key="2">
    <source>
        <dbReference type="UniProtKB" id="P26039"/>
    </source>
</evidence>
<evidence type="ECO:0000250" key="3">
    <source>
        <dbReference type="UniProtKB" id="P54939"/>
    </source>
</evidence>
<evidence type="ECO:0000255" key="4">
    <source>
        <dbReference type="PROSITE-ProRule" id="PRU00084"/>
    </source>
</evidence>
<evidence type="ECO:0000255" key="5">
    <source>
        <dbReference type="PROSITE-ProRule" id="PRU00292"/>
    </source>
</evidence>
<evidence type="ECO:0000269" key="6">
    <source>
    </source>
</evidence>
<evidence type="ECO:0000269" key="7">
    <source>
    </source>
</evidence>
<evidence type="ECO:0000269" key="8">
    <source>
    </source>
</evidence>
<evidence type="ECO:0000269" key="9">
    <source>
    </source>
</evidence>
<evidence type="ECO:0000269" key="10">
    <source>
    </source>
</evidence>
<evidence type="ECO:0000269" key="11">
    <source>
    </source>
</evidence>
<evidence type="ECO:0000269" key="12">
    <source>
    </source>
</evidence>
<evidence type="ECO:0000269" key="13">
    <source>
    </source>
</evidence>
<evidence type="ECO:0000269" key="14">
    <source>
    </source>
</evidence>
<evidence type="ECO:0000269" key="15">
    <source>
    </source>
</evidence>
<evidence type="ECO:0000269" key="16">
    <source>
    </source>
</evidence>
<evidence type="ECO:0000269" key="17">
    <source>
    </source>
</evidence>
<evidence type="ECO:0000269" key="18">
    <source ref="1"/>
</evidence>
<evidence type="ECO:0000305" key="19"/>
<evidence type="ECO:0007744" key="20">
    <source>
    </source>
</evidence>
<evidence type="ECO:0007744" key="21">
    <source>
    </source>
</evidence>
<evidence type="ECO:0007744" key="22">
    <source>
    </source>
</evidence>
<evidence type="ECO:0007744" key="23">
    <source>
    </source>
</evidence>
<evidence type="ECO:0007744" key="24">
    <source>
    </source>
</evidence>
<evidence type="ECO:0007744" key="25">
    <source>
    </source>
</evidence>
<evidence type="ECO:0007744" key="26">
    <source>
    </source>
</evidence>
<evidence type="ECO:0007829" key="27">
    <source>
        <dbReference type="PDB" id="1SYQ"/>
    </source>
</evidence>
<evidence type="ECO:0007829" key="28">
    <source>
        <dbReference type="PDB" id="2MWN"/>
    </source>
</evidence>
<evidence type="ECO:0007829" key="29">
    <source>
        <dbReference type="PDB" id="4DJ9"/>
    </source>
</evidence>
<sequence length="2541" mass="269767">MVALSLKISIGNVVKTMQFEPSTMVYDACRIIRERIPEAPAGPPSDFGLFLSDDDPKKGIWLEAGKALDYYMLRNGDTMEYRKKQRPLKIRMLDGTVKTIMVDDSKTVTDMLMTICARIGITNHDEYSLVRELMEEKKEEITGTLRKDKTLLRDEKKMEKLKQKLHTDDELNWLDHGRTLREQGVEEHETLLLRRKFFYSDQNVDSRDPVQLNLLYVQARDDILNGSHPVSFDKACEFAGFQCQIQFGPHNEQKHKAGFLDLKDFLPKEYVKQKGERKIFQAHKNCGQMSEIEAKVRYVKLARSLKTYGVSFFLVKEKMKGKNKLVPRLLGITKECVMRVDEKTKEVIQEWNLTNIKRWAASPKSFTLDFGDYQDGYYSVQTTEGEQIAQLIAGYIDIILKKKKSKDHFGLEGDEESTMLEDSVSPKKSTVLQQQYNRVGKVEHGSVALPAIMRSGASGPENFQVGSMPPAQQQITSGQMHRGHMPPLTSAQQALTGTINSSMQAVQAAQATLDDFDTLPPLGQDAASKAWRKNKMDESKHEIHSQVDAITAGTASVVNLTAGDPAETDYTAVGCAVTTISSNLTEMSRGVKLLAALLEDEGGSGRPLLQAAKGLAGAVSELLRSAQPASAEPRQNLLQAAGNVGQASGELLQQIGESDTDPHFQDALMQLAKAVASAAAALVLKAKSVAQRTEDSGLQTQVIAAATQCALSTSQLVACTKVVAPTISSPVCQEQLVEAGRLVAKAVEGCVSASQAATEDGQLLRGVGAAATAVTQALNELLQHVKAHATGAGPAGRYDQATDTILTVTENIFSSMGDAGEMVRQARILAQATSDLVNAIKADAEGESDLENSRKLLSAAKILADATAKMVEAAKGAAAHPDSEEQQQRLREAAEGLRMATNAAAQNAIKKKLVQRLEHAAKQAAASATQTIAAAQHAASTPKASAGPQPLLVQSCKAVAEQIPLLVQGVRGSQAQPDSPSAQLALIAASQSFLQPGGKMVAAAKASVPTIQDQASAMQLSQCAKNLGTALAELRTAAQKAQEACGPLEMDSALSVVQNLEKDLQEVKAAARDGKLKPLPGETMEKCTQDLGNSTKAVSSAIAQLLGEVAQGNENYAGIAARDVAGGLRSLAQAARGVAALTSDPAVQAIVLDTASDVLDKASSLIEEAKKAAGHPGDPESQQRLAQVAKAVTQALNRCVSCLPGQRDVDNALRAVGDASKRLLSDSLPPSTGTFQEAQSRLNEAAAGLNQAATELVQASRGTPQDLARASGRFGQDFSTFLEAGVEMAGQAPSQEDRAQVVSNLKGISMSSSKLLLAAKALSTDPAAPNLKSQLAAAARAVTDSINQLITMCTQQAPGQKECDNALRELETVRELLENPVQPINDMSYFGCLDSVMENSKVLGEAMTGISQNAKNGNLPEFGDAISTASKALCGFTEAAAQAAYLVGVSDPNSQAGQQGLVEPTQFARANQAIQMACQSLGEPGCTQAQVLSAATIVAKHTSALCNSCRLASARTTNPTAKRQFVQSAKEVANSTANLVKTIKALDGAFTEENRAQCRAATAPLLEAVDNLSAFASNPEFSSIPAQISPEGRAAMEPIVISAKTMLESAGGLIQTARALAVNPRDPPSWSVLAGHSRTVSDSIKKLITSMRDKAPGQLECETAIAALNSCLRDLDQASLAAVSQQLAPREGISQEALHTQMLTAVQEISHLIEPLANAARAEASQLGHKVSQMAQYFEPLTLAAVGAASKTLSHPQQMALLDQTKTLAESALQLLYTAKEAGGNPKQAAHTQEALEEAVQMMTEAVEDLTTTLNEAASAAGVVGGMVDSITQAINQLDEGPMGEPEGSFVDYQTTMVRTAKAIAVTVQEMVTKSNTSPEELGPLANQLTSDYGRLASEAKPAAVAAENEEIGSHIKHRVQELGHGCAALVTKAGALQCSPSDAYTKKELIECARRVSEKVSHVLAALQAGNRGTQACITAASAVSGIIADLDTTIMFATAGTLNREGTETFADHREGILKTAKVLVEDTKVLVQNAAGSQEKLAQAAQSSVATITRLADVVKLGAASLGAEDPETQVVLINAVKDVAKALGDLISATKAAAGKVGDDPAVWQLKNSAKVMVTNVTSLLKTVKAVEDEATKGTRALEATTEHIRQELAVFCSPEPPAKTSTPEDFIRMTKGITMATAKAVAAGNSCRQEDVIATANLSRRAIADMLRACKEAAYHPEVAPDVRLRALHYGRECANGYLELLDHVLLTLQKPSPELKQQLTGHSKRVAGSVTELIQAAEAMKGTEWVDPEDPTVIAENELLGAAAAIEAAAKKLEQLKPRAKPKEADESLNFEEQILEAAKSIAAATSALVKAASAAQRELVAQGKVGAIPANALDDGQWSQGLISAARMVAAATNNLCEAANAAVQGHASQEKLISSAKQVAASTAQLLVACKVKADQDSEAMKRLQAAGNAVKRASDNLVKAAQKAAAFEEQENETVVVKEKMVGGIAQIIAAQEEMLRKERELEEARKKLAQIRQQQYKFLPSELRDEH</sequence>
<keyword id="KW-0002">3D-structure</keyword>
<keyword id="KW-0007">Acetylation</keyword>
<keyword id="KW-0025">Alternative splicing</keyword>
<keyword id="KW-0965">Cell junction</keyword>
<keyword id="KW-1003">Cell membrane</keyword>
<keyword id="KW-0966">Cell projection</keyword>
<keyword id="KW-0963">Cytoplasm</keyword>
<keyword id="KW-0206">Cytoskeleton</keyword>
<keyword id="KW-0903">Direct protein sequencing</keyword>
<keyword id="KW-0945">Host-virus interaction</keyword>
<keyword id="KW-0472">Membrane</keyword>
<keyword id="KW-0597">Phosphoprotein</keyword>
<keyword id="KW-1267">Proteomics identification</keyword>
<keyword id="KW-1185">Reference proteome</keyword>
<name>TLN1_HUMAN</name>
<protein>
    <recommendedName>
        <fullName>Talin-1</fullName>
    </recommendedName>
</protein>
<gene>
    <name type="primary">TLN1</name>
    <name type="synonym">KIAA1027</name>
    <name type="synonym">TLN</name>
</gene>